<proteinExistence type="inferred from homology"/>
<protein>
    <recommendedName>
        <fullName evidence="1">Dephospho-CoA kinase</fullName>
        <ecNumber evidence="1">2.7.1.24</ecNumber>
    </recommendedName>
    <alternativeName>
        <fullName evidence="1">Dephosphocoenzyme A kinase</fullName>
    </alternativeName>
</protein>
<dbReference type="EC" id="2.7.1.24" evidence="1"/>
<dbReference type="EMBL" id="CR931997">
    <property type="protein sequence ID" value="CAI36987.1"/>
    <property type="molecule type" value="Genomic_DNA"/>
</dbReference>
<dbReference type="RefSeq" id="WP_011273429.1">
    <property type="nucleotide sequence ID" value="NC_007164.1"/>
</dbReference>
<dbReference type="SMR" id="Q4JW20"/>
<dbReference type="STRING" id="306537.jk0825"/>
<dbReference type="KEGG" id="cjk:jk0825"/>
<dbReference type="PATRIC" id="fig|306537.10.peg.836"/>
<dbReference type="eggNOG" id="COG0237">
    <property type="taxonomic scope" value="Bacteria"/>
</dbReference>
<dbReference type="HOGENOM" id="CLU_057180_1_1_11"/>
<dbReference type="OrthoDB" id="9812943at2"/>
<dbReference type="UniPathway" id="UPA00241">
    <property type="reaction ID" value="UER00356"/>
</dbReference>
<dbReference type="Proteomes" id="UP000000545">
    <property type="component" value="Chromosome"/>
</dbReference>
<dbReference type="GO" id="GO:0005737">
    <property type="term" value="C:cytoplasm"/>
    <property type="evidence" value="ECO:0007669"/>
    <property type="project" value="UniProtKB-SubCell"/>
</dbReference>
<dbReference type="GO" id="GO:0005524">
    <property type="term" value="F:ATP binding"/>
    <property type="evidence" value="ECO:0007669"/>
    <property type="project" value="UniProtKB-UniRule"/>
</dbReference>
<dbReference type="GO" id="GO:0004140">
    <property type="term" value="F:dephospho-CoA kinase activity"/>
    <property type="evidence" value="ECO:0007669"/>
    <property type="project" value="UniProtKB-UniRule"/>
</dbReference>
<dbReference type="GO" id="GO:0015937">
    <property type="term" value="P:coenzyme A biosynthetic process"/>
    <property type="evidence" value="ECO:0007669"/>
    <property type="project" value="UniProtKB-UniRule"/>
</dbReference>
<dbReference type="CDD" id="cd02022">
    <property type="entry name" value="DPCK"/>
    <property type="match status" value="1"/>
</dbReference>
<dbReference type="Gene3D" id="3.40.50.300">
    <property type="entry name" value="P-loop containing nucleotide triphosphate hydrolases"/>
    <property type="match status" value="1"/>
</dbReference>
<dbReference type="HAMAP" id="MF_00376">
    <property type="entry name" value="Dephospho_CoA_kinase"/>
    <property type="match status" value="1"/>
</dbReference>
<dbReference type="InterPro" id="IPR001977">
    <property type="entry name" value="Depp_CoAkinase"/>
</dbReference>
<dbReference type="InterPro" id="IPR027417">
    <property type="entry name" value="P-loop_NTPase"/>
</dbReference>
<dbReference type="NCBIfam" id="TIGR00152">
    <property type="entry name" value="dephospho-CoA kinase"/>
    <property type="match status" value="1"/>
</dbReference>
<dbReference type="NCBIfam" id="NF002879">
    <property type="entry name" value="PRK03333.1"/>
    <property type="match status" value="1"/>
</dbReference>
<dbReference type="PANTHER" id="PTHR10695:SF46">
    <property type="entry name" value="BIFUNCTIONAL COENZYME A SYNTHASE-RELATED"/>
    <property type="match status" value="1"/>
</dbReference>
<dbReference type="PANTHER" id="PTHR10695">
    <property type="entry name" value="DEPHOSPHO-COA KINASE-RELATED"/>
    <property type="match status" value="1"/>
</dbReference>
<dbReference type="Pfam" id="PF01121">
    <property type="entry name" value="CoaE"/>
    <property type="match status" value="1"/>
</dbReference>
<dbReference type="SUPFAM" id="SSF52540">
    <property type="entry name" value="P-loop containing nucleoside triphosphate hydrolases"/>
    <property type="match status" value="1"/>
</dbReference>
<dbReference type="PROSITE" id="PS51219">
    <property type="entry name" value="DPCK"/>
    <property type="match status" value="1"/>
</dbReference>
<keyword id="KW-0067">ATP-binding</keyword>
<keyword id="KW-0173">Coenzyme A biosynthesis</keyword>
<keyword id="KW-0963">Cytoplasm</keyword>
<keyword id="KW-0418">Kinase</keyword>
<keyword id="KW-0547">Nucleotide-binding</keyword>
<keyword id="KW-1185">Reference proteome</keyword>
<keyword id="KW-0808">Transferase</keyword>
<reference key="1">
    <citation type="journal article" date="2005" name="J. Bacteriol.">
        <title>Complete genome sequence and analysis of the multiresistant nosocomial pathogen Corynebacterium jeikeium K411, a lipid-requiring bacterium of the human skin flora.</title>
        <authorList>
            <person name="Tauch A."/>
            <person name="Kaiser O."/>
            <person name="Hain T."/>
            <person name="Goesmann A."/>
            <person name="Weisshaar B."/>
            <person name="Albersmeier A."/>
            <person name="Bekel T."/>
            <person name="Bischoff N."/>
            <person name="Brune I."/>
            <person name="Chakraborty T."/>
            <person name="Kalinowski J."/>
            <person name="Meyer F."/>
            <person name="Rupp O."/>
            <person name="Schneiker S."/>
            <person name="Viehoever P."/>
            <person name="Puehler A."/>
        </authorList>
    </citation>
    <scope>NUCLEOTIDE SEQUENCE [LARGE SCALE GENOMIC DNA]</scope>
    <source>
        <strain>K411</strain>
    </source>
</reference>
<name>COAE_CORJK</name>
<comment type="function">
    <text evidence="1">Catalyzes the phosphorylation of the 3'-hydroxyl group of dephosphocoenzyme A to form coenzyme A.</text>
</comment>
<comment type="catalytic activity">
    <reaction evidence="1">
        <text>3'-dephospho-CoA + ATP = ADP + CoA + H(+)</text>
        <dbReference type="Rhea" id="RHEA:18245"/>
        <dbReference type="ChEBI" id="CHEBI:15378"/>
        <dbReference type="ChEBI" id="CHEBI:30616"/>
        <dbReference type="ChEBI" id="CHEBI:57287"/>
        <dbReference type="ChEBI" id="CHEBI:57328"/>
        <dbReference type="ChEBI" id="CHEBI:456216"/>
        <dbReference type="EC" id="2.7.1.24"/>
    </reaction>
</comment>
<comment type="pathway">
    <text evidence="1">Cofactor biosynthesis; coenzyme A biosynthesis; CoA from (R)-pantothenate: step 5/5.</text>
</comment>
<comment type="subcellular location">
    <subcellularLocation>
        <location evidence="1">Cytoplasm</location>
    </subcellularLocation>
</comment>
<comment type="similarity">
    <text evidence="1">Belongs to the CoaE family.</text>
</comment>
<sequence length="194" mass="20974">MITIGLTGGIGSGKSTVSSRLAELGAFIVDADLVAREIVEPGQPALAELADAFDGVLNPDGTLNRGELARQAFATPEATEKLNAITHPRIRARTEELFKQGRESGAQVLVYDMPLLIENGEVDKVDHVLVVDAPDELRIDRLVQHRGLDENDARRRIAAQIDRATRLNAADTVLDNSGTVEQLLEQVDGFWGGL</sequence>
<gene>
    <name evidence="1" type="primary">coaE</name>
    <name type="ordered locus">jk0825</name>
</gene>
<organism>
    <name type="scientific">Corynebacterium jeikeium (strain K411)</name>
    <dbReference type="NCBI Taxonomy" id="306537"/>
    <lineage>
        <taxon>Bacteria</taxon>
        <taxon>Bacillati</taxon>
        <taxon>Actinomycetota</taxon>
        <taxon>Actinomycetes</taxon>
        <taxon>Mycobacteriales</taxon>
        <taxon>Corynebacteriaceae</taxon>
        <taxon>Corynebacterium</taxon>
    </lineage>
</organism>
<evidence type="ECO:0000255" key="1">
    <source>
        <dbReference type="HAMAP-Rule" id="MF_00376"/>
    </source>
</evidence>
<accession>Q4JW20</accession>
<feature type="chain" id="PRO_0000243278" description="Dephospho-CoA kinase">
    <location>
        <begin position="1"/>
        <end position="194"/>
    </location>
</feature>
<feature type="domain" description="DPCK" evidence="1">
    <location>
        <begin position="3"/>
        <end position="194"/>
    </location>
</feature>
<feature type="binding site" evidence="1">
    <location>
        <begin position="11"/>
        <end position="16"/>
    </location>
    <ligand>
        <name>ATP</name>
        <dbReference type="ChEBI" id="CHEBI:30616"/>
    </ligand>
</feature>